<feature type="chain" id="PRO_0000128276" description="Pantothenate synthetase">
    <location>
        <begin position="1"/>
        <end position="286"/>
    </location>
</feature>
<feature type="active site" description="Proton donor" evidence="1">
    <location>
        <position position="38"/>
    </location>
</feature>
<feature type="binding site" evidence="1">
    <location>
        <begin position="31"/>
        <end position="38"/>
    </location>
    <ligand>
        <name>ATP</name>
        <dbReference type="ChEBI" id="CHEBI:30616"/>
    </ligand>
</feature>
<feature type="binding site" evidence="1">
    <location>
        <position position="62"/>
    </location>
    <ligand>
        <name>(R)-pantoate</name>
        <dbReference type="ChEBI" id="CHEBI:15980"/>
    </ligand>
</feature>
<feature type="binding site" evidence="1">
    <location>
        <position position="62"/>
    </location>
    <ligand>
        <name>beta-alanine</name>
        <dbReference type="ChEBI" id="CHEBI:57966"/>
    </ligand>
</feature>
<feature type="binding site" evidence="1">
    <location>
        <begin position="148"/>
        <end position="151"/>
    </location>
    <ligand>
        <name>ATP</name>
        <dbReference type="ChEBI" id="CHEBI:30616"/>
    </ligand>
</feature>
<feature type="binding site" evidence="1">
    <location>
        <position position="154"/>
    </location>
    <ligand>
        <name>(R)-pantoate</name>
        <dbReference type="ChEBI" id="CHEBI:15980"/>
    </ligand>
</feature>
<feature type="binding site" evidence="1">
    <location>
        <position position="177"/>
    </location>
    <ligand>
        <name>ATP</name>
        <dbReference type="ChEBI" id="CHEBI:30616"/>
    </ligand>
</feature>
<feature type="binding site" evidence="1">
    <location>
        <begin position="185"/>
        <end position="188"/>
    </location>
    <ligand>
        <name>ATP</name>
        <dbReference type="ChEBI" id="CHEBI:30616"/>
    </ligand>
</feature>
<proteinExistence type="inferred from homology"/>
<keyword id="KW-0067">ATP-binding</keyword>
<keyword id="KW-0963">Cytoplasm</keyword>
<keyword id="KW-0436">Ligase</keyword>
<keyword id="KW-0547">Nucleotide-binding</keyword>
<keyword id="KW-0566">Pantothenate biosynthesis</keyword>
<keyword id="KW-1185">Reference proteome</keyword>
<name>PANC_STAEQ</name>
<dbReference type="EC" id="6.3.2.1" evidence="1"/>
<dbReference type="EMBL" id="CP000029">
    <property type="protein sequence ID" value="AAW53066.1"/>
    <property type="molecule type" value="Genomic_DNA"/>
</dbReference>
<dbReference type="RefSeq" id="WP_001830610.1">
    <property type="nucleotide sequence ID" value="NC_002976.3"/>
</dbReference>
<dbReference type="SMR" id="Q5HL36"/>
<dbReference type="STRING" id="176279.SERP2151"/>
<dbReference type="GeneID" id="50017782"/>
<dbReference type="KEGG" id="ser:SERP2151"/>
<dbReference type="eggNOG" id="COG0414">
    <property type="taxonomic scope" value="Bacteria"/>
</dbReference>
<dbReference type="HOGENOM" id="CLU_047148_0_0_9"/>
<dbReference type="UniPathway" id="UPA00028">
    <property type="reaction ID" value="UER00005"/>
</dbReference>
<dbReference type="Proteomes" id="UP000000531">
    <property type="component" value="Chromosome"/>
</dbReference>
<dbReference type="GO" id="GO:0005829">
    <property type="term" value="C:cytosol"/>
    <property type="evidence" value="ECO:0007669"/>
    <property type="project" value="TreeGrafter"/>
</dbReference>
<dbReference type="GO" id="GO:0005524">
    <property type="term" value="F:ATP binding"/>
    <property type="evidence" value="ECO:0007669"/>
    <property type="project" value="UniProtKB-KW"/>
</dbReference>
<dbReference type="GO" id="GO:0004592">
    <property type="term" value="F:pantoate-beta-alanine ligase activity"/>
    <property type="evidence" value="ECO:0007669"/>
    <property type="project" value="UniProtKB-UniRule"/>
</dbReference>
<dbReference type="GO" id="GO:0015940">
    <property type="term" value="P:pantothenate biosynthetic process"/>
    <property type="evidence" value="ECO:0007669"/>
    <property type="project" value="UniProtKB-UniRule"/>
</dbReference>
<dbReference type="CDD" id="cd00560">
    <property type="entry name" value="PanC"/>
    <property type="match status" value="1"/>
</dbReference>
<dbReference type="FunFam" id="3.30.1300.10:FF:000001">
    <property type="entry name" value="Pantothenate synthetase"/>
    <property type="match status" value="1"/>
</dbReference>
<dbReference type="FunFam" id="3.40.50.620:FF:000013">
    <property type="entry name" value="Pantothenate synthetase"/>
    <property type="match status" value="1"/>
</dbReference>
<dbReference type="Gene3D" id="3.40.50.620">
    <property type="entry name" value="HUPs"/>
    <property type="match status" value="1"/>
</dbReference>
<dbReference type="Gene3D" id="3.30.1300.10">
    <property type="entry name" value="Pantoate-beta-alanine ligase, C-terminal domain"/>
    <property type="match status" value="1"/>
</dbReference>
<dbReference type="HAMAP" id="MF_00158">
    <property type="entry name" value="PanC"/>
    <property type="match status" value="1"/>
</dbReference>
<dbReference type="InterPro" id="IPR003721">
    <property type="entry name" value="Pantoate_ligase"/>
</dbReference>
<dbReference type="InterPro" id="IPR042176">
    <property type="entry name" value="Pantoate_ligase_C"/>
</dbReference>
<dbReference type="InterPro" id="IPR014729">
    <property type="entry name" value="Rossmann-like_a/b/a_fold"/>
</dbReference>
<dbReference type="NCBIfam" id="TIGR00018">
    <property type="entry name" value="panC"/>
    <property type="match status" value="1"/>
</dbReference>
<dbReference type="PANTHER" id="PTHR21299">
    <property type="entry name" value="CYTIDYLATE KINASE/PANTOATE-BETA-ALANINE LIGASE"/>
    <property type="match status" value="1"/>
</dbReference>
<dbReference type="PANTHER" id="PTHR21299:SF1">
    <property type="entry name" value="PANTOATE--BETA-ALANINE LIGASE"/>
    <property type="match status" value="1"/>
</dbReference>
<dbReference type="Pfam" id="PF02569">
    <property type="entry name" value="Pantoate_ligase"/>
    <property type="match status" value="1"/>
</dbReference>
<dbReference type="SUPFAM" id="SSF52374">
    <property type="entry name" value="Nucleotidylyl transferase"/>
    <property type="match status" value="1"/>
</dbReference>
<sequence length="286" mass="32278">MTKVITTINEMQSIVKQHQREGKTIGFVPTMGALHDGHLTMMKQSVSENDLTVISIFVNPLQFGPNEDFDAYPRQLDDDVAAVKKLQVDYVFHPSVDEMYPEELGIHLKVGHLAQVLEGAQRPGHFEGVVTVVNKLFNIVQPDYAYFGKKDAQQLAIVEKMVKDFNLPVHVIGIDIVREKDGLAKSSRNIYLTSEERKEAKHLYQSLRLAKNLYEAGERDSNEIIGQIAAYLNKNISGHIDDLGIYSYPNLIQQSKIHGRIFISLAVKFSKARLIDNIIIGDDYID</sequence>
<evidence type="ECO:0000255" key="1">
    <source>
        <dbReference type="HAMAP-Rule" id="MF_00158"/>
    </source>
</evidence>
<organism>
    <name type="scientific">Staphylococcus epidermidis (strain ATCC 35984 / DSM 28319 / BCRC 17069 / CCUG 31568 / BM 3577 / RP62A)</name>
    <dbReference type="NCBI Taxonomy" id="176279"/>
    <lineage>
        <taxon>Bacteria</taxon>
        <taxon>Bacillati</taxon>
        <taxon>Bacillota</taxon>
        <taxon>Bacilli</taxon>
        <taxon>Bacillales</taxon>
        <taxon>Staphylococcaceae</taxon>
        <taxon>Staphylococcus</taxon>
    </lineage>
</organism>
<comment type="function">
    <text evidence="1">Catalyzes the condensation of pantoate with beta-alanine in an ATP-dependent reaction via a pantoyl-adenylate intermediate.</text>
</comment>
<comment type="catalytic activity">
    <reaction evidence="1">
        <text>(R)-pantoate + beta-alanine + ATP = (R)-pantothenate + AMP + diphosphate + H(+)</text>
        <dbReference type="Rhea" id="RHEA:10912"/>
        <dbReference type="ChEBI" id="CHEBI:15378"/>
        <dbReference type="ChEBI" id="CHEBI:15980"/>
        <dbReference type="ChEBI" id="CHEBI:29032"/>
        <dbReference type="ChEBI" id="CHEBI:30616"/>
        <dbReference type="ChEBI" id="CHEBI:33019"/>
        <dbReference type="ChEBI" id="CHEBI:57966"/>
        <dbReference type="ChEBI" id="CHEBI:456215"/>
        <dbReference type="EC" id="6.3.2.1"/>
    </reaction>
</comment>
<comment type="pathway">
    <text evidence="1">Cofactor biosynthesis; (R)-pantothenate biosynthesis; (R)-pantothenate from (R)-pantoate and beta-alanine: step 1/1.</text>
</comment>
<comment type="subunit">
    <text evidence="1">Homodimer.</text>
</comment>
<comment type="subcellular location">
    <subcellularLocation>
        <location evidence="1">Cytoplasm</location>
    </subcellularLocation>
</comment>
<comment type="miscellaneous">
    <text evidence="1">The reaction proceeds by a bi uni uni bi ping pong mechanism.</text>
</comment>
<comment type="similarity">
    <text evidence="1">Belongs to the pantothenate synthetase family.</text>
</comment>
<protein>
    <recommendedName>
        <fullName evidence="1">Pantothenate synthetase</fullName>
        <shortName evidence="1">PS</shortName>
        <ecNumber evidence="1">6.3.2.1</ecNumber>
    </recommendedName>
    <alternativeName>
        <fullName evidence="1">Pantoate--beta-alanine ligase</fullName>
    </alternativeName>
    <alternativeName>
        <fullName evidence="1">Pantoate-activating enzyme</fullName>
    </alternativeName>
</protein>
<gene>
    <name evidence="1" type="primary">panC</name>
    <name type="ordered locus">SERP2151</name>
</gene>
<reference key="1">
    <citation type="journal article" date="2005" name="J. Bacteriol.">
        <title>Insights on evolution of virulence and resistance from the complete genome analysis of an early methicillin-resistant Staphylococcus aureus strain and a biofilm-producing methicillin-resistant Staphylococcus epidermidis strain.</title>
        <authorList>
            <person name="Gill S.R."/>
            <person name="Fouts D.E."/>
            <person name="Archer G.L."/>
            <person name="Mongodin E.F."/>
            <person name="DeBoy R.T."/>
            <person name="Ravel J."/>
            <person name="Paulsen I.T."/>
            <person name="Kolonay J.F."/>
            <person name="Brinkac L.M."/>
            <person name="Beanan M.J."/>
            <person name="Dodson R.J."/>
            <person name="Daugherty S.C."/>
            <person name="Madupu R."/>
            <person name="Angiuoli S.V."/>
            <person name="Durkin A.S."/>
            <person name="Haft D.H."/>
            <person name="Vamathevan J.J."/>
            <person name="Khouri H."/>
            <person name="Utterback T.R."/>
            <person name="Lee C."/>
            <person name="Dimitrov G."/>
            <person name="Jiang L."/>
            <person name="Qin H."/>
            <person name="Weidman J."/>
            <person name="Tran K."/>
            <person name="Kang K.H."/>
            <person name="Hance I.R."/>
            <person name="Nelson K.E."/>
            <person name="Fraser C.M."/>
        </authorList>
    </citation>
    <scope>NUCLEOTIDE SEQUENCE [LARGE SCALE GENOMIC DNA]</scope>
    <source>
        <strain>ATCC 35984 / DSM 28319 / BCRC 17069 / CCUG 31568 / BM 3577 / RP62A</strain>
    </source>
</reference>
<accession>Q5HL36</accession>